<sequence length="173" mass="19762">MDIAIQHPWFKRALGPFYPSRLFDQFFGEGLFEYDLLPFLSSTISPYYRQSLFRTVLDSGISEVRSDRDKFVIFLDVKHFSPEDLTVKVQEDFVEIHGKHNERQDDHGYISREFHRRYRLPSNVDQTALSCSVSADGMLTFSGPKIPSGMDAGHSERAIPVSREEKPGSAPSS</sequence>
<feature type="chain" id="PRO_0000125864" description="Alpha-crystallin A chain">
    <location>
        <begin position="1"/>
        <end position="173"/>
    </location>
</feature>
<feature type="domain" description="sHSP" evidence="5">
    <location>
        <begin position="52"/>
        <end position="162"/>
    </location>
</feature>
<feature type="region of interest" description="Required for complex formation with BFSP1 and BFSP2" evidence="4">
    <location>
        <begin position="1"/>
        <end position="63"/>
    </location>
</feature>
<feature type="region of interest" description="Disordered" evidence="6">
    <location>
        <begin position="144"/>
        <end position="173"/>
    </location>
</feature>
<feature type="compositionally biased region" description="Basic and acidic residues" evidence="6">
    <location>
        <begin position="153"/>
        <end position="167"/>
    </location>
</feature>
<feature type="binding site" evidence="2">
    <location>
        <position position="100"/>
    </location>
    <ligand>
        <name>Zn(2+)</name>
        <dbReference type="ChEBI" id="CHEBI:29105"/>
        <label>1</label>
    </ligand>
</feature>
<feature type="binding site" evidence="2">
    <location>
        <position position="102"/>
    </location>
    <ligand>
        <name>Zn(2+)</name>
        <dbReference type="ChEBI" id="CHEBI:29105"/>
        <label>1</label>
    </ligand>
</feature>
<feature type="binding site" evidence="2">
    <location>
        <position position="107"/>
    </location>
    <ligand>
        <name>Zn(2+)</name>
        <dbReference type="ChEBI" id="CHEBI:29105"/>
        <label>2</label>
    </ligand>
</feature>
<feature type="binding site" evidence="2">
    <location>
        <position position="154"/>
    </location>
    <ligand>
        <name>Zn(2+)</name>
        <dbReference type="ChEBI" id="CHEBI:29105"/>
        <label>3</label>
    </ligand>
</feature>
<feature type="modified residue" description="N-acetylmethionine" evidence="3 7">
    <location>
        <position position="1"/>
    </location>
</feature>
<feature type="modified residue" description="Deamidated glutamine; partial" evidence="1">
    <location>
        <position position="6"/>
    </location>
</feature>
<feature type="modified residue" description="Phosphoserine" evidence="4">
    <location>
        <position position="45"/>
    </location>
</feature>
<feature type="modified residue" description="Deamidated glutamine; partial" evidence="1">
    <location>
        <position position="50"/>
    </location>
</feature>
<feature type="modified residue" description="N6-acetyllysine" evidence="4">
    <location>
        <position position="70"/>
    </location>
</feature>
<feature type="modified residue" description="Deamidated glutamine; partial" evidence="1">
    <location>
        <position position="90"/>
    </location>
</feature>
<feature type="modified residue" description="N6-acetyllysine" evidence="4">
    <location>
        <position position="99"/>
    </location>
</feature>
<feature type="modified residue" description="Deamidated asparagine; partial" evidence="1">
    <location>
        <position position="101"/>
    </location>
</feature>
<feature type="modified residue" description="Phosphoserine" evidence="2">
    <location>
        <position position="122"/>
    </location>
</feature>
<feature type="modified residue" description="Deamidated asparagine; partial" evidence="1">
    <location>
        <position position="123"/>
    </location>
</feature>
<feature type="glycosylation site" description="O-linked (GlcNAc) serine" evidence="1">
    <location>
        <position position="162"/>
    </location>
</feature>
<dbReference type="PIR" id="A02880">
    <property type="entry name" value="CYHOAA"/>
</dbReference>
<dbReference type="RefSeq" id="NP_001157483.1">
    <property type="nucleotide sequence ID" value="NM_001164011.1"/>
</dbReference>
<dbReference type="SMR" id="P02478"/>
<dbReference type="FunCoup" id="P02478">
    <property type="interactions" value="191"/>
</dbReference>
<dbReference type="STRING" id="9796.ENSECAP00000016847"/>
<dbReference type="GlyCosmos" id="P02478">
    <property type="glycosylation" value="1 site, No reported glycans"/>
</dbReference>
<dbReference type="PaxDb" id="9796-ENSECAP00000016847"/>
<dbReference type="GeneID" id="100051134"/>
<dbReference type="KEGG" id="ecb:100051134"/>
<dbReference type="CTD" id="1409"/>
<dbReference type="HOGENOM" id="CLU_095001_2_0_1"/>
<dbReference type="InParanoid" id="P02478"/>
<dbReference type="OMA" id="QQDDHGY"/>
<dbReference type="OrthoDB" id="1431247at2759"/>
<dbReference type="TreeFam" id="TF105049"/>
<dbReference type="Proteomes" id="UP000002281">
    <property type="component" value="Chromosome 26"/>
</dbReference>
<dbReference type="Bgee" id="ENSECAG00000019281">
    <property type="expression patterns" value="Expressed in retina and 6 other cell types or tissues"/>
</dbReference>
<dbReference type="GO" id="GO:0005737">
    <property type="term" value="C:cytoplasm"/>
    <property type="evidence" value="ECO:0000250"/>
    <property type="project" value="UniProtKB"/>
</dbReference>
<dbReference type="GO" id="GO:0005634">
    <property type="term" value="C:nucleus"/>
    <property type="evidence" value="ECO:0000250"/>
    <property type="project" value="UniProtKB"/>
</dbReference>
<dbReference type="GO" id="GO:0046872">
    <property type="term" value="F:metal ion binding"/>
    <property type="evidence" value="ECO:0007669"/>
    <property type="project" value="UniProtKB-KW"/>
</dbReference>
<dbReference type="GO" id="GO:0005212">
    <property type="term" value="F:structural constituent of eye lens"/>
    <property type="evidence" value="ECO:0007669"/>
    <property type="project" value="UniProtKB-KW"/>
</dbReference>
<dbReference type="GO" id="GO:0051082">
    <property type="term" value="F:unfolded protein binding"/>
    <property type="evidence" value="ECO:0000318"/>
    <property type="project" value="GO_Central"/>
</dbReference>
<dbReference type="GO" id="GO:0002088">
    <property type="term" value="P:lens development in camera-type eye"/>
    <property type="evidence" value="ECO:0000318"/>
    <property type="project" value="GO_Central"/>
</dbReference>
<dbReference type="GO" id="GO:0043066">
    <property type="term" value="P:negative regulation of apoptotic process"/>
    <property type="evidence" value="ECO:0000318"/>
    <property type="project" value="GO_Central"/>
</dbReference>
<dbReference type="GO" id="GO:0042026">
    <property type="term" value="P:protein refolding"/>
    <property type="evidence" value="ECO:0000318"/>
    <property type="project" value="GO_Central"/>
</dbReference>
<dbReference type="GO" id="GO:0009408">
    <property type="term" value="P:response to heat"/>
    <property type="evidence" value="ECO:0000318"/>
    <property type="project" value="GO_Central"/>
</dbReference>
<dbReference type="FunFam" id="2.60.40.790:FF:000008">
    <property type="entry name" value="Alpha-crystallin A chain"/>
    <property type="match status" value="1"/>
</dbReference>
<dbReference type="Gene3D" id="2.60.40.790">
    <property type="match status" value="1"/>
</dbReference>
<dbReference type="InterPro" id="IPR002068">
    <property type="entry name" value="A-crystallin/Hsp20_dom"/>
</dbReference>
<dbReference type="InterPro" id="IPR055269">
    <property type="entry name" value="Alpha-crystallin/HSP_16"/>
</dbReference>
<dbReference type="InterPro" id="IPR001436">
    <property type="entry name" value="Alpha-crystallin/sHSP_animal"/>
</dbReference>
<dbReference type="InterPro" id="IPR003090">
    <property type="entry name" value="Alpha-crystallin_N"/>
</dbReference>
<dbReference type="InterPro" id="IPR008978">
    <property type="entry name" value="HSP20-like_chaperone"/>
</dbReference>
<dbReference type="PANTHER" id="PTHR45640:SF14">
    <property type="entry name" value="ALPHA-CRYSTALLIN A CHAIN"/>
    <property type="match status" value="1"/>
</dbReference>
<dbReference type="PANTHER" id="PTHR45640">
    <property type="entry name" value="HEAT SHOCK PROTEIN HSP-12.2-RELATED"/>
    <property type="match status" value="1"/>
</dbReference>
<dbReference type="Pfam" id="PF00525">
    <property type="entry name" value="Crystallin"/>
    <property type="match status" value="1"/>
</dbReference>
<dbReference type="Pfam" id="PF00011">
    <property type="entry name" value="HSP20"/>
    <property type="match status" value="1"/>
</dbReference>
<dbReference type="PIRSF" id="PIRSF036514">
    <property type="entry name" value="Sm_HSP_B1"/>
    <property type="match status" value="1"/>
</dbReference>
<dbReference type="PRINTS" id="PR00299">
    <property type="entry name" value="ACRYSTALLIN"/>
</dbReference>
<dbReference type="SUPFAM" id="SSF49764">
    <property type="entry name" value="HSP20-like chaperones"/>
    <property type="match status" value="1"/>
</dbReference>
<dbReference type="PROSITE" id="PS01031">
    <property type="entry name" value="SHSP"/>
    <property type="match status" value="1"/>
</dbReference>
<name>CRYAA_HORSE</name>
<reference key="1">
    <citation type="journal article" date="1975" name="Eur. J. Biochem.">
        <title>Primary structures of the alpha-crystallin A chains of seven mammalian species.</title>
        <authorList>
            <person name="de Jong W.W."/>
            <person name="van der Ouderaa F.J."/>
            <person name="Versteeg M."/>
            <person name="Groenewoud G."/>
            <person name="van Amelsvoort J.M."/>
            <person name="Bloemendal H."/>
        </authorList>
    </citation>
    <scope>PARTIAL PROTEIN SEQUENCE</scope>
</reference>
<organism>
    <name type="scientific">Equus caballus</name>
    <name type="common">Horse</name>
    <dbReference type="NCBI Taxonomy" id="9796"/>
    <lineage>
        <taxon>Eukaryota</taxon>
        <taxon>Metazoa</taxon>
        <taxon>Chordata</taxon>
        <taxon>Craniata</taxon>
        <taxon>Vertebrata</taxon>
        <taxon>Euteleostomi</taxon>
        <taxon>Mammalia</taxon>
        <taxon>Eutheria</taxon>
        <taxon>Laurasiatheria</taxon>
        <taxon>Perissodactyla</taxon>
        <taxon>Equidae</taxon>
        <taxon>Equus</taxon>
    </lineage>
</organism>
<gene>
    <name type="primary">CRYAA</name>
</gene>
<proteinExistence type="evidence at protein level"/>
<accession>P02478</accession>
<keyword id="KW-0007">Acetylation</keyword>
<keyword id="KW-0143">Chaperone</keyword>
<keyword id="KW-0963">Cytoplasm</keyword>
<keyword id="KW-0903">Direct protein sequencing</keyword>
<keyword id="KW-0273">Eye lens protein</keyword>
<keyword id="KW-0325">Glycoprotein</keyword>
<keyword id="KW-0479">Metal-binding</keyword>
<keyword id="KW-0488">Methylation</keyword>
<keyword id="KW-0539">Nucleus</keyword>
<keyword id="KW-0597">Phosphoprotein</keyword>
<keyword id="KW-1185">Reference proteome</keyword>
<keyword id="KW-0862">Zinc</keyword>
<comment type="function">
    <text evidence="4">Contributes to the transparency and refractive index of the lens. Acts as a chaperone, preventing aggregation of various proteins under a wide range of stress conditions. Required for the correct formation of lens intermediate filaments as part of a complex composed of BFSP1, BFSP2 and CRYAA.</text>
</comment>
<comment type="subunit">
    <text evidence="2 4">Heteromer composed of three CRYAA and one CRYAB subunits. Inter-subunit bridging via zinc ions enhances stability, which is crucial as there is no protein turn over in the lens. Can also form homodimers and homotetramers (dimers of dimers) which serve as the building blocks of homooligomers (By similarity). Within homooligomers, the zinc-binding motif is created from residues of 3 different molecules. His-100 and Glu-102 from one molecule are ligands of the zinc ion, and His-107 and His-154 residues from additional molecules complete the site with tetrahedral coordination geometry (By similarity). Part of a complex required for lens intermediate filament formation composed of BFSP1, BFSP2 and CRYAA (By similarity).</text>
</comment>
<comment type="subcellular location">
    <subcellularLocation>
        <location evidence="4">Cytoplasm</location>
    </subcellularLocation>
    <subcellularLocation>
        <location evidence="4">Nucleus</location>
    </subcellularLocation>
    <text evidence="4">Translocates to the nucleus during heat shock and resides in sub-nuclear structures known as SC35 speckles or nuclear splicing speckles.</text>
</comment>
<comment type="PTM">
    <text evidence="4">Acetylation at Lys-70 may increase chaperone activity.</text>
</comment>
<comment type="PTM">
    <text evidence="4">Undergoes age-dependent proteolytical cleavage at the C-terminus.</text>
</comment>
<comment type="similarity">
    <text evidence="5">Belongs to the small heat shock protein (HSP20) family.</text>
</comment>
<evidence type="ECO:0000250" key="1"/>
<evidence type="ECO:0000250" key="2">
    <source>
        <dbReference type="UniProtKB" id="P02470"/>
    </source>
</evidence>
<evidence type="ECO:0000250" key="3">
    <source>
        <dbReference type="UniProtKB" id="P02474"/>
    </source>
</evidence>
<evidence type="ECO:0000250" key="4">
    <source>
        <dbReference type="UniProtKB" id="P02489"/>
    </source>
</evidence>
<evidence type="ECO:0000255" key="5">
    <source>
        <dbReference type="PROSITE-ProRule" id="PRU00285"/>
    </source>
</evidence>
<evidence type="ECO:0000256" key="6">
    <source>
        <dbReference type="SAM" id="MobiDB-lite"/>
    </source>
</evidence>
<evidence type="ECO:0000305" key="7"/>
<protein>
    <recommendedName>
        <fullName>Alpha-crystallin A chain</fullName>
    </recommendedName>
</protein>